<evidence type="ECO:0000255" key="1">
    <source>
        <dbReference type="HAMAP-Rule" id="MF_01286"/>
    </source>
</evidence>
<organism>
    <name type="scientific">Methanococcoides burtonii (strain DSM 6242 / NBRC 107633 / OCM 468 / ACE-M)</name>
    <dbReference type="NCBI Taxonomy" id="259564"/>
    <lineage>
        <taxon>Archaea</taxon>
        <taxon>Methanobacteriati</taxon>
        <taxon>Methanobacteriota</taxon>
        <taxon>Stenosarchaea group</taxon>
        <taxon>Methanomicrobia</taxon>
        <taxon>Methanosarcinales</taxon>
        <taxon>Methanosarcinaceae</taxon>
        <taxon>Methanococcoides</taxon>
    </lineage>
</organism>
<proteinExistence type="inferred from homology"/>
<sequence>MKTYLELMRAGNCAMAAFAGLIGVLIAYNILSSASPYVSLSLFDTSLIFAIVFLVTGAGNGLNDYFDIEIDKVNKPSRPIPSGKISLKSALYFSLFLFITGITLAFLVNPLCGIIALFNSMVLILYAQSLKRTPFFGNASVGYLTGSTFLFGGAVFGMAGLQALVVLFLLATLATIAREIVKDVEDIVGDKKDGARTLPILIGAKKASYIAAAFGFTAMLASPVPYLQSILNEQYLFVVAIADIFFLIAVYQILGKKDAARSSKLFKFAMLFALISFIVGA</sequence>
<comment type="function">
    <text evidence="1">Prenyltransferase that catalyzes the transfer of the geranylgeranyl moiety of geranylgeranyl diphosphate (GGPP) to the C2 hydroxyl of (S)-3-O-geranylgeranylglyceryl phosphate (GGGP). This reaction is the second ether-bond-formation step in the biosynthesis of archaeal membrane lipids.</text>
</comment>
<comment type="catalytic activity">
    <reaction evidence="1">
        <text>sn-3-O-(geranylgeranyl)glycerol 1-phosphate + (2E,6E,10E)-geranylgeranyl diphosphate = 2,3-bis-O-(geranylgeranyl)-sn-glycerol 1-phosphate + diphosphate</text>
        <dbReference type="Rhea" id="RHEA:18109"/>
        <dbReference type="ChEBI" id="CHEBI:33019"/>
        <dbReference type="ChEBI" id="CHEBI:57677"/>
        <dbReference type="ChEBI" id="CHEBI:58756"/>
        <dbReference type="ChEBI" id="CHEBI:58837"/>
        <dbReference type="EC" id="2.5.1.42"/>
    </reaction>
</comment>
<comment type="cofactor">
    <cofactor evidence="1">
        <name>Mg(2+)</name>
        <dbReference type="ChEBI" id="CHEBI:18420"/>
    </cofactor>
</comment>
<comment type="pathway">
    <text evidence="1">Membrane lipid metabolism; glycerophospholipid metabolism.</text>
</comment>
<comment type="subcellular location">
    <subcellularLocation>
        <location evidence="1">Cell membrane</location>
        <topology evidence="1">Multi-pass membrane protein</topology>
    </subcellularLocation>
</comment>
<comment type="similarity">
    <text evidence="1">Belongs to the UbiA prenyltransferase family. DGGGP synthase subfamily.</text>
</comment>
<keyword id="KW-1003">Cell membrane</keyword>
<keyword id="KW-0444">Lipid biosynthesis</keyword>
<keyword id="KW-0443">Lipid metabolism</keyword>
<keyword id="KW-0460">Magnesium</keyword>
<keyword id="KW-0472">Membrane</keyword>
<keyword id="KW-0594">Phospholipid biosynthesis</keyword>
<keyword id="KW-1208">Phospholipid metabolism</keyword>
<keyword id="KW-0808">Transferase</keyword>
<keyword id="KW-0812">Transmembrane</keyword>
<keyword id="KW-1133">Transmembrane helix</keyword>
<protein>
    <recommendedName>
        <fullName evidence="1">Digeranylgeranylglyceryl phosphate synthase</fullName>
        <shortName evidence="1">DGGGP synthase</shortName>
        <shortName evidence="1">DGGGPS</shortName>
        <ecNumber evidence="1">2.5.1.42</ecNumber>
    </recommendedName>
    <alternativeName>
        <fullName evidence="1">(S)-2,3-di-O-geranylgeranylglyceryl phosphate synthase</fullName>
    </alternativeName>
    <alternativeName>
        <fullName evidence="1">Geranylgeranylglycerol-phosphate geranylgeranyltransferase</fullName>
    </alternativeName>
</protein>
<dbReference type="EC" id="2.5.1.42" evidence="1"/>
<dbReference type="EMBL" id="CP000300">
    <property type="protein sequence ID" value="ABE52573.1"/>
    <property type="molecule type" value="Genomic_DNA"/>
</dbReference>
<dbReference type="RefSeq" id="WP_011499716.1">
    <property type="nucleotide sequence ID" value="NC_007955.1"/>
</dbReference>
<dbReference type="SMR" id="Q12VF3"/>
<dbReference type="STRING" id="259564.Mbur_1679"/>
<dbReference type="GeneID" id="3998075"/>
<dbReference type="KEGG" id="mbu:Mbur_1679"/>
<dbReference type="HOGENOM" id="CLU_073311_1_1_2"/>
<dbReference type="UniPathway" id="UPA00940"/>
<dbReference type="Proteomes" id="UP000001979">
    <property type="component" value="Chromosome"/>
</dbReference>
<dbReference type="GO" id="GO:0005886">
    <property type="term" value="C:plasma membrane"/>
    <property type="evidence" value="ECO:0007669"/>
    <property type="project" value="UniProtKB-SubCell"/>
</dbReference>
<dbReference type="GO" id="GO:0047295">
    <property type="term" value="F:geranylgeranylglycerol-phosphate geranylgeranyltransferase activity"/>
    <property type="evidence" value="ECO:0007669"/>
    <property type="project" value="UniProtKB-UniRule"/>
</dbReference>
<dbReference type="GO" id="GO:0000287">
    <property type="term" value="F:magnesium ion binding"/>
    <property type="evidence" value="ECO:0007669"/>
    <property type="project" value="UniProtKB-UniRule"/>
</dbReference>
<dbReference type="GO" id="GO:0046474">
    <property type="term" value="P:glycerophospholipid biosynthetic process"/>
    <property type="evidence" value="ECO:0007669"/>
    <property type="project" value="UniProtKB-UniRule"/>
</dbReference>
<dbReference type="CDD" id="cd13961">
    <property type="entry name" value="PT_UbiA_DGGGPS"/>
    <property type="match status" value="1"/>
</dbReference>
<dbReference type="Gene3D" id="1.10.357.140">
    <property type="entry name" value="UbiA prenyltransferase"/>
    <property type="match status" value="1"/>
</dbReference>
<dbReference type="Gene3D" id="1.20.120.1780">
    <property type="entry name" value="UbiA prenyltransferase"/>
    <property type="match status" value="1"/>
</dbReference>
<dbReference type="HAMAP" id="MF_01286">
    <property type="entry name" value="DGGGP_synth"/>
    <property type="match status" value="1"/>
</dbReference>
<dbReference type="InterPro" id="IPR023547">
    <property type="entry name" value="DGGGP_synth"/>
</dbReference>
<dbReference type="InterPro" id="IPR050475">
    <property type="entry name" value="Prenyltransferase_related"/>
</dbReference>
<dbReference type="InterPro" id="IPR000537">
    <property type="entry name" value="UbiA_prenyltransferase"/>
</dbReference>
<dbReference type="InterPro" id="IPR044878">
    <property type="entry name" value="UbiA_sf"/>
</dbReference>
<dbReference type="NCBIfam" id="NF009521">
    <property type="entry name" value="PRK12882.1"/>
    <property type="match status" value="1"/>
</dbReference>
<dbReference type="PANTHER" id="PTHR42723">
    <property type="entry name" value="CHLOROPHYLL SYNTHASE"/>
    <property type="match status" value="1"/>
</dbReference>
<dbReference type="PANTHER" id="PTHR42723:SF1">
    <property type="entry name" value="CHLOROPHYLL SYNTHASE, CHLOROPLASTIC"/>
    <property type="match status" value="1"/>
</dbReference>
<dbReference type="Pfam" id="PF01040">
    <property type="entry name" value="UbiA"/>
    <property type="match status" value="1"/>
</dbReference>
<gene>
    <name type="ordered locus">Mbur_1679</name>
</gene>
<accession>Q12VF3</accession>
<reference key="1">
    <citation type="journal article" date="2009" name="ISME J.">
        <title>The genome sequence of the psychrophilic archaeon, Methanococcoides burtonii: the role of genome evolution in cold adaptation.</title>
        <authorList>
            <person name="Allen M.A."/>
            <person name="Lauro F.M."/>
            <person name="Williams T.J."/>
            <person name="Burg D."/>
            <person name="Siddiqui K.S."/>
            <person name="De Francisci D."/>
            <person name="Chong K.W."/>
            <person name="Pilak O."/>
            <person name="Chew H.H."/>
            <person name="De Maere M.Z."/>
            <person name="Ting L."/>
            <person name="Katrib M."/>
            <person name="Ng C."/>
            <person name="Sowers K.R."/>
            <person name="Galperin M.Y."/>
            <person name="Anderson I.J."/>
            <person name="Ivanova N."/>
            <person name="Dalin E."/>
            <person name="Martinez M."/>
            <person name="Lapidus A."/>
            <person name="Hauser L."/>
            <person name="Land M."/>
            <person name="Thomas T."/>
            <person name="Cavicchioli R."/>
        </authorList>
    </citation>
    <scope>NUCLEOTIDE SEQUENCE [LARGE SCALE GENOMIC DNA]</scope>
    <source>
        <strain>DSM 6242 / NBRC 107633 / OCM 468 / ACE-M</strain>
    </source>
</reference>
<name>DGGGP_METBU</name>
<feature type="chain" id="PRO_5000113203" description="Digeranylgeranylglyceryl phosphate synthase">
    <location>
        <begin position="1"/>
        <end position="281"/>
    </location>
</feature>
<feature type="transmembrane region" description="Helical" evidence="1">
    <location>
        <begin position="14"/>
        <end position="34"/>
    </location>
</feature>
<feature type="transmembrane region" description="Helical" evidence="1">
    <location>
        <begin position="38"/>
        <end position="58"/>
    </location>
</feature>
<feature type="transmembrane region" description="Helical" evidence="1">
    <location>
        <begin position="95"/>
        <end position="115"/>
    </location>
</feature>
<feature type="transmembrane region" description="Helical" evidence="1">
    <location>
        <begin position="149"/>
        <end position="169"/>
    </location>
</feature>
<feature type="transmembrane region" description="Helical" evidence="1">
    <location>
        <begin position="207"/>
        <end position="227"/>
    </location>
</feature>
<feature type="transmembrane region" description="Helical" evidence="1">
    <location>
        <begin position="235"/>
        <end position="255"/>
    </location>
</feature>
<feature type="transmembrane region" description="Helical" evidence="1">
    <location>
        <begin position="259"/>
        <end position="279"/>
    </location>
</feature>